<comment type="function">
    <text evidence="4">Contributes to the transparency and refractive index of the lens. Acts as a chaperone, preventing aggregation of various proteins under a wide range of stress conditions. Required for the correct formation of lens intermediate filaments as part of a complex composed of BFSP1, BFSP2 and CRYAA.</text>
</comment>
<comment type="subunit">
    <text evidence="2 4">Heteromer composed of three CRYAA and one CRYAB subunits. Inter-subunit bridging via zinc ions enhances stability, which is crucial as there is no protein turn over in the lens. Can also form homodimers and homotetramers (dimers of dimers) which serve as the building blocks of homooligomers (By similarity). Within homooligomers, the zinc-binding motif is created from residues of 3 different molecules. His-100 and Glu-102 from one molecule are ligands of the zinc ion, and His-107 and His-154 residues from additional molecules complete the site with tetrahedral coordination geometry (By similarity). Part of a complex required for lens intermediate filament formation composed of BFSP1, BFSP2 and CRYAA (By similarity).</text>
</comment>
<comment type="subcellular location">
    <subcellularLocation>
        <location evidence="4">Cytoplasm</location>
    </subcellularLocation>
    <subcellularLocation>
        <location evidence="4">Nucleus</location>
    </subcellularLocation>
    <text evidence="4">Translocates to the nucleus during heat shock and resides in sub-nuclear structures known as SC35 speckles or nuclear splicing speckles.</text>
</comment>
<comment type="PTM">
    <text evidence="4">Acetylation at Lys-70 may increase chaperone activity.</text>
</comment>
<comment type="PTM">
    <text evidence="4">Undergoes age-dependent proteolytical cleavage at the C-terminus.</text>
</comment>
<comment type="similarity">
    <text evidence="5">Belongs to the small heat shock protein (HSP20) family.</text>
</comment>
<feature type="chain" id="PRO_0000125860" description="Alpha-crystallin A chain">
    <location>
        <begin position="1"/>
        <end position="173"/>
    </location>
</feature>
<feature type="domain" description="sHSP" evidence="5">
    <location>
        <begin position="52"/>
        <end position="162"/>
    </location>
</feature>
<feature type="region of interest" description="Required for complex formation with BFSP1 and BFSP2" evidence="4">
    <location>
        <begin position="1"/>
        <end position="63"/>
    </location>
</feature>
<feature type="region of interest" description="Disordered" evidence="6">
    <location>
        <begin position="144"/>
        <end position="173"/>
    </location>
</feature>
<feature type="compositionally biased region" description="Basic and acidic residues" evidence="6">
    <location>
        <begin position="153"/>
        <end position="167"/>
    </location>
</feature>
<feature type="binding site" evidence="2">
    <location>
        <position position="100"/>
    </location>
    <ligand>
        <name>Zn(2+)</name>
        <dbReference type="ChEBI" id="CHEBI:29105"/>
        <label>1</label>
    </ligand>
</feature>
<feature type="binding site" evidence="2">
    <location>
        <position position="102"/>
    </location>
    <ligand>
        <name>Zn(2+)</name>
        <dbReference type="ChEBI" id="CHEBI:29105"/>
        <label>1</label>
    </ligand>
</feature>
<feature type="binding site" evidence="2">
    <location>
        <position position="107"/>
    </location>
    <ligand>
        <name>Zn(2+)</name>
        <dbReference type="ChEBI" id="CHEBI:29105"/>
        <label>2</label>
    </ligand>
</feature>
<feature type="binding site" evidence="2">
    <location>
        <position position="154"/>
    </location>
    <ligand>
        <name>Zn(2+)</name>
        <dbReference type="ChEBI" id="CHEBI:29105"/>
        <label>3</label>
    </ligand>
</feature>
<feature type="modified residue" description="N-acetylmethionine" evidence="3 7">
    <location>
        <position position="1"/>
    </location>
</feature>
<feature type="modified residue" description="Deamidated glutamine; partial" evidence="1">
    <location>
        <position position="6"/>
    </location>
</feature>
<feature type="modified residue" description="Phosphoserine" evidence="4">
    <location>
        <position position="45"/>
    </location>
</feature>
<feature type="modified residue" description="Deamidated glutamine; partial" evidence="1">
    <location>
        <position position="50"/>
    </location>
</feature>
<feature type="modified residue" description="N6-acetyllysine" evidence="4">
    <location>
        <position position="70"/>
    </location>
</feature>
<feature type="modified residue" description="Deamidated glutamine; partial" evidence="1">
    <location>
        <position position="90"/>
    </location>
</feature>
<feature type="modified residue" description="N6-acetyllysine" evidence="4">
    <location>
        <position position="99"/>
    </location>
</feature>
<feature type="modified residue" description="Deamidated asparagine; partial" evidence="1">
    <location>
        <position position="101"/>
    </location>
</feature>
<feature type="modified residue" description="Phosphoserine" evidence="2">
    <location>
        <position position="122"/>
    </location>
</feature>
<feature type="modified residue" description="Deamidated asparagine; partial" evidence="1">
    <location>
        <position position="123"/>
    </location>
</feature>
<feature type="modified residue" description="Deamidated glutamine; partial" evidence="1">
    <location>
        <position position="147"/>
    </location>
</feature>
<feature type="glycosylation site" description="O-linked (GlcNAc) serine" evidence="1">
    <location>
        <position position="162"/>
    </location>
</feature>
<organism>
    <name type="scientific">Otolemur crassicaudatus</name>
    <name type="common">Brown greater galago</name>
    <name type="synonym">Galago crassicaudatus</name>
    <dbReference type="NCBI Taxonomy" id="9463"/>
    <lineage>
        <taxon>Eukaryota</taxon>
        <taxon>Metazoa</taxon>
        <taxon>Chordata</taxon>
        <taxon>Craniata</taxon>
        <taxon>Vertebrata</taxon>
        <taxon>Euteleostomi</taxon>
        <taxon>Mammalia</taxon>
        <taxon>Eutheria</taxon>
        <taxon>Euarchontoglires</taxon>
        <taxon>Primates</taxon>
        <taxon>Strepsirrhini</taxon>
        <taxon>Lorisiformes</taxon>
        <taxon>Galagidae</taxon>
        <taxon>Otolemur</taxon>
    </lineage>
</organism>
<sequence>MDVTIQHPWFKRPLGPFYPSRLFDQFFGEGLFEYDLLPFLSSTISPYYRQSLFRTVLDSGVSEVRSDRDKFVIFLDVKHFSPEDLTVKVQEDFVEIHGKHNERQDDHGYISREFHRRYRLPSNVDQSALSCSVSADGMLTFSGPKVQSGLDAGHSERAIPVSREEKPSSAPSS</sequence>
<evidence type="ECO:0000250" key="1"/>
<evidence type="ECO:0000250" key="2">
    <source>
        <dbReference type="UniProtKB" id="P02470"/>
    </source>
</evidence>
<evidence type="ECO:0000250" key="3">
    <source>
        <dbReference type="UniProtKB" id="P02474"/>
    </source>
</evidence>
<evidence type="ECO:0000250" key="4">
    <source>
        <dbReference type="UniProtKB" id="P02489"/>
    </source>
</evidence>
<evidence type="ECO:0000255" key="5">
    <source>
        <dbReference type="PROSITE-ProRule" id="PRU00285"/>
    </source>
</evidence>
<evidence type="ECO:0000256" key="6">
    <source>
        <dbReference type="SAM" id="MobiDB-lite"/>
    </source>
</evidence>
<evidence type="ECO:0000305" key="7"/>
<accession>P68287</accession>
<accession>P02495</accession>
<protein>
    <recommendedName>
        <fullName>Alpha-crystallin A chain</fullName>
    </recommendedName>
</protein>
<name>CRYAA_OTOCR</name>
<dbReference type="EMBL" id="U24068">
    <property type="protein sequence ID" value="AAA97570.1"/>
    <property type="molecule type" value="Genomic_DNA"/>
</dbReference>
<dbReference type="SMR" id="P68287"/>
<dbReference type="GlyCosmos" id="P68287">
    <property type="glycosylation" value="1 site, No reported glycans"/>
</dbReference>
<dbReference type="GO" id="GO:0005737">
    <property type="term" value="C:cytoplasm"/>
    <property type="evidence" value="ECO:0000250"/>
    <property type="project" value="UniProtKB"/>
</dbReference>
<dbReference type="GO" id="GO:0005634">
    <property type="term" value="C:nucleus"/>
    <property type="evidence" value="ECO:0000250"/>
    <property type="project" value="UniProtKB"/>
</dbReference>
<dbReference type="GO" id="GO:0046872">
    <property type="term" value="F:metal ion binding"/>
    <property type="evidence" value="ECO:0007669"/>
    <property type="project" value="UniProtKB-KW"/>
</dbReference>
<dbReference type="GO" id="GO:0005212">
    <property type="term" value="F:structural constituent of eye lens"/>
    <property type="evidence" value="ECO:0007669"/>
    <property type="project" value="UniProtKB-KW"/>
</dbReference>
<dbReference type="GO" id="GO:0051082">
    <property type="term" value="F:unfolded protein binding"/>
    <property type="evidence" value="ECO:0007669"/>
    <property type="project" value="TreeGrafter"/>
</dbReference>
<dbReference type="GO" id="GO:0002088">
    <property type="term" value="P:lens development in camera-type eye"/>
    <property type="evidence" value="ECO:0007669"/>
    <property type="project" value="TreeGrafter"/>
</dbReference>
<dbReference type="GO" id="GO:0043066">
    <property type="term" value="P:negative regulation of apoptotic process"/>
    <property type="evidence" value="ECO:0007669"/>
    <property type="project" value="TreeGrafter"/>
</dbReference>
<dbReference type="GO" id="GO:0042026">
    <property type="term" value="P:protein refolding"/>
    <property type="evidence" value="ECO:0007669"/>
    <property type="project" value="TreeGrafter"/>
</dbReference>
<dbReference type="GO" id="GO:0009408">
    <property type="term" value="P:response to heat"/>
    <property type="evidence" value="ECO:0007669"/>
    <property type="project" value="TreeGrafter"/>
</dbReference>
<dbReference type="FunFam" id="2.60.40.790:FF:000008">
    <property type="entry name" value="Alpha-crystallin A chain"/>
    <property type="match status" value="1"/>
</dbReference>
<dbReference type="Gene3D" id="2.60.40.790">
    <property type="match status" value="1"/>
</dbReference>
<dbReference type="InterPro" id="IPR002068">
    <property type="entry name" value="A-crystallin/Hsp20_dom"/>
</dbReference>
<dbReference type="InterPro" id="IPR055269">
    <property type="entry name" value="Alpha-crystallin/HSP_16"/>
</dbReference>
<dbReference type="InterPro" id="IPR001436">
    <property type="entry name" value="Alpha-crystallin/sHSP_animal"/>
</dbReference>
<dbReference type="InterPro" id="IPR003090">
    <property type="entry name" value="Alpha-crystallin_N"/>
</dbReference>
<dbReference type="InterPro" id="IPR008978">
    <property type="entry name" value="HSP20-like_chaperone"/>
</dbReference>
<dbReference type="PANTHER" id="PTHR45640:SF14">
    <property type="entry name" value="ALPHA-CRYSTALLIN A CHAIN"/>
    <property type="match status" value="1"/>
</dbReference>
<dbReference type="PANTHER" id="PTHR45640">
    <property type="entry name" value="HEAT SHOCK PROTEIN HSP-12.2-RELATED"/>
    <property type="match status" value="1"/>
</dbReference>
<dbReference type="Pfam" id="PF00525">
    <property type="entry name" value="Crystallin"/>
    <property type="match status" value="1"/>
</dbReference>
<dbReference type="Pfam" id="PF00011">
    <property type="entry name" value="HSP20"/>
    <property type="match status" value="1"/>
</dbReference>
<dbReference type="PIRSF" id="PIRSF036514">
    <property type="entry name" value="Sm_HSP_B1"/>
    <property type="match status" value="1"/>
</dbReference>
<dbReference type="PRINTS" id="PR00299">
    <property type="entry name" value="ACRYSTALLIN"/>
</dbReference>
<dbReference type="SUPFAM" id="SSF49764">
    <property type="entry name" value="HSP20-like chaperones"/>
    <property type="match status" value="1"/>
</dbReference>
<dbReference type="PROSITE" id="PS01031">
    <property type="entry name" value="SHSP"/>
    <property type="match status" value="1"/>
</dbReference>
<gene>
    <name type="primary">CRYAA</name>
</gene>
<reference key="1">
    <citation type="book" date="1980" name="Protides of the biological fluids, Proc. 28th colloquium">
        <title>Trends in the molecular evolution of alpha-crystallin.</title>
        <editorList>
            <person name="Peeters H."/>
        </editorList>
        <authorList>
            <person name="de Jong W.W."/>
            <person name="Zweers A."/>
            <person name="Goodman M."/>
        </authorList>
    </citation>
    <scope>PROTEIN SEQUENCE</scope>
</reference>
<reference key="2">
    <citation type="journal article" date="1995" name="J. Mol. Evol.">
        <title>A reassessment of mammalian alpha A-crystallin sequences using DNA sequencing: implications for anthropoid affinities of tarsier.</title>
        <authorList>
            <person name="Jaworski C.J."/>
        </authorList>
    </citation>
    <scope>NUCLEOTIDE SEQUENCE [GENOMIC DNA] OF 121-163</scope>
</reference>
<proteinExistence type="evidence at protein level"/>
<keyword id="KW-0007">Acetylation</keyword>
<keyword id="KW-0143">Chaperone</keyword>
<keyword id="KW-0963">Cytoplasm</keyword>
<keyword id="KW-0903">Direct protein sequencing</keyword>
<keyword id="KW-0273">Eye lens protein</keyword>
<keyword id="KW-0325">Glycoprotein</keyword>
<keyword id="KW-0479">Metal-binding</keyword>
<keyword id="KW-0488">Methylation</keyword>
<keyword id="KW-0539">Nucleus</keyword>
<keyword id="KW-0597">Phosphoprotein</keyword>
<keyword id="KW-0862">Zinc</keyword>